<name>RF1_AERPE</name>
<dbReference type="EMBL" id="BA000002">
    <property type="protein sequence ID" value="BAA80998.2"/>
    <property type="molecule type" value="Genomic_DNA"/>
</dbReference>
<dbReference type="PIR" id="F72501">
    <property type="entry name" value="F72501"/>
</dbReference>
<dbReference type="RefSeq" id="WP_010866724.1">
    <property type="nucleotide sequence ID" value="NC_000854.2"/>
</dbReference>
<dbReference type="PDB" id="3AGK">
    <property type="method" value="X-ray"/>
    <property type="resolution" value="2.10 A"/>
    <property type="chains" value="A=1-373"/>
</dbReference>
<dbReference type="PDB" id="3VMF">
    <property type="method" value="X-ray"/>
    <property type="resolution" value="2.30 A"/>
    <property type="chains" value="B=1-373"/>
</dbReference>
<dbReference type="PDBsum" id="3AGK"/>
<dbReference type="PDBsum" id="3VMF"/>
<dbReference type="SMR" id="Q9YAF1"/>
<dbReference type="DIP" id="DIP-59468N"/>
<dbReference type="IntAct" id="Q9YAF1">
    <property type="interactions" value="1"/>
</dbReference>
<dbReference type="STRING" id="272557.APE_1988.1"/>
<dbReference type="EnsemblBacteria" id="BAA80998">
    <property type="protein sequence ID" value="BAA80998"/>
    <property type="gene ID" value="APE_1988.1"/>
</dbReference>
<dbReference type="GeneID" id="1445114"/>
<dbReference type="KEGG" id="ape:APE_1988.1"/>
<dbReference type="PATRIC" id="fig|272557.25.peg.1327"/>
<dbReference type="eggNOG" id="arCOG01742">
    <property type="taxonomic scope" value="Archaea"/>
</dbReference>
<dbReference type="EvolutionaryTrace" id="Q9YAF1"/>
<dbReference type="Proteomes" id="UP000002518">
    <property type="component" value="Chromosome"/>
</dbReference>
<dbReference type="GO" id="GO:0005737">
    <property type="term" value="C:cytoplasm"/>
    <property type="evidence" value="ECO:0007669"/>
    <property type="project" value="UniProtKB-SubCell"/>
</dbReference>
<dbReference type="GO" id="GO:0016149">
    <property type="term" value="F:translation release factor activity, codon specific"/>
    <property type="evidence" value="ECO:0007669"/>
    <property type="project" value="UniProtKB-UniRule"/>
</dbReference>
<dbReference type="FunFam" id="3.30.420.60:FF:000003">
    <property type="entry name" value="Peptide chain release factor subunit 1"/>
    <property type="match status" value="1"/>
</dbReference>
<dbReference type="Gene3D" id="3.30.1330.30">
    <property type="match status" value="1"/>
</dbReference>
<dbReference type="Gene3D" id="3.30.960.10">
    <property type="entry name" value="eRF1 domain 1"/>
    <property type="match status" value="1"/>
</dbReference>
<dbReference type="Gene3D" id="3.30.420.60">
    <property type="entry name" value="eRF1 domain 2"/>
    <property type="match status" value="1"/>
</dbReference>
<dbReference type="HAMAP" id="MF_00424">
    <property type="entry name" value="Rel_fact_arch_1"/>
    <property type="match status" value="1"/>
</dbReference>
<dbReference type="InterPro" id="IPR042226">
    <property type="entry name" value="eFR1_2_sf"/>
</dbReference>
<dbReference type="InterPro" id="IPR005140">
    <property type="entry name" value="eRF1_1_Pelota"/>
</dbReference>
<dbReference type="InterPro" id="IPR024049">
    <property type="entry name" value="eRF1_1_sf"/>
</dbReference>
<dbReference type="InterPro" id="IPR005141">
    <property type="entry name" value="eRF1_2"/>
</dbReference>
<dbReference type="InterPro" id="IPR005142">
    <property type="entry name" value="eRF1_3"/>
</dbReference>
<dbReference type="InterPro" id="IPR020918">
    <property type="entry name" value="Peptide_chain-rel_aRF1"/>
</dbReference>
<dbReference type="InterPro" id="IPR004403">
    <property type="entry name" value="Peptide_chain-rel_eRF1/aRF1"/>
</dbReference>
<dbReference type="InterPro" id="IPR029064">
    <property type="entry name" value="Ribosomal_eL30-like_sf"/>
</dbReference>
<dbReference type="NCBIfam" id="TIGR03676">
    <property type="entry name" value="aRF1_eRF1"/>
    <property type="match status" value="1"/>
</dbReference>
<dbReference type="PANTHER" id="PTHR10113">
    <property type="entry name" value="PEPTIDE CHAIN RELEASE FACTOR SUBUNIT 1"/>
    <property type="match status" value="1"/>
</dbReference>
<dbReference type="Pfam" id="PF03463">
    <property type="entry name" value="eRF1_1"/>
    <property type="match status" value="1"/>
</dbReference>
<dbReference type="Pfam" id="PF03464">
    <property type="entry name" value="eRF1_2"/>
    <property type="match status" value="1"/>
</dbReference>
<dbReference type="Pfam" id="PF03465">
    <property type="entry name" value="eRF1_3"/>
    <property type="match status" value="1"/>
</dbReference>
<dbReference type="SMART" id="SM01194">
    <property type="entry name" value="eRF1_1"/>
    <property type="match status" value="1"/>
</dbReference>
<dbReference type="SUPFAM" id="SSF55315">
    <property type="entry name" value="L30e-like"/>
    <property type="match status" value="1"/>
</dbReference>
<dbReference type="SUPFAM" id="SSF55481">
    <property type="entry name" value="N-terminal domain of eukaryotic peptide chain release factor subunit 1, ERF1"/>
    <property type="match status" value="1"/>
</dbReference>
<dbReference type="SUPFAM" id="SSF53137">
    <property type="entry name" value="Translational machinery components"/>
    <property type="match status" value="1"/>
</dbReference>
<proteinExistence type="evidence at protein level"/>
<feature type="chain" id="PRO_0000143168" description="Peptide chain release factor subunit 1">
    <location>
        <begin position="1"/>
        <end position="373"/>
    </location>
</feature>
<feature type="helix" evidence="3">
    <location>
        <begin position="8"/>
        <end position="10"/>
    </location>
</feature>
<feature type="helix" evidence="3">
    <location>
        <begin position="14"/>
        <end position="24"/>
    </location>
</feature>
<feature type="strand" evidence="3">
    <location>
        <begin position="30"/>
        <end position="32"/>
    </location>
</feature>
<feature type="strand" evidence="3">
    <location>
        <begin position="34"/>
        <end position="39"/>
    </location>
</feature>
<feature type="helix" evidence="3">
    <location>
        <begin position="45"/>
        <end position="58"/>
    </location>
</feature>
<feature type="helix" evidence="3">
    <location>
        <begin position="59"/>
        <end position="61"/>
    </location>
</feature>
<feature type="helix" evidence="3">
    <location>
        <begin position="65"/>
        <end position="82"/>
    </location>
</feature>
<feature type="strand" evidence="3">
    <location>
        <begin position="93"/>
        <end position="98"/>
    </location>
</feature>
<feature type="turn" evidence="4">
    <location>
        <begin position="101"/>
        <end position="103"/>
    </location>
</feature>
<feature type="strand" evidence="3">
    <location>
        <begin position="107"/>
        <end position="112"/>
    </location>
</feature>
<feature type="strand" evidence="3">
    <location>
        <begin position="121"/>
        <end position="127"/>
    </location>
</feature>
<feature type="helix" evidence="3">
    <location>
        <begin position="131"/>
        <end position="134"/>
    </location>
</feature>
<feature type="strand" evidence="3">
    <location>
        <begin position="142"/>
        <end position="149"/>
    </location>
</feature>
<feature type="strand" evidence="3">
    <location>
        <begin position="152"/>
        <end position="159"/>
    </location>
</feature>
<feature type="strand" evidence="3">
    <location>
        <begin position="162"/>
        <end position="170"/>
    </location>
</feature>
<feature type="helix" evidence="3">
    <location>
        <begin position="188"/>
        <end position="215"/>
    </location>
</feature>
<feature type="strand" evidence="3">
    <location>
        <begin position="219"/>
        <end position="227"/>
    </location>
</feature>
<feature type="helix" evidence="3">
    <location>
        <begin position="230"/>
        <end position="236"/>
    </location>
</feature>
<feature type="helix" evidence="3">
    <location>
        <begin position="242"/>
        <end position="245"/>
    </location>
</feature>
<feature type="helix" evidence="3">
    <location>
        <begin position="259"/>
        <end position="269"/>
    </location>
</feature>
<feature type="helix" evidence="3">
    <location>
        <begin position="274"/>
        <end position="276"/>
    </location>
</feature>
<feature type="helix" evidence="3">
    <location>
        <begin position="277"/>
        <end position="294"/>
    </location>
</feature>
<feature type="strand" evidence="3">
    <location>
        <begin position="300"/>
        <end position="303"/>
    </location>
</feature>
<feature type="helix" evidence="3">
    <location>
        <begin position="304"/>
        <end position="312"/>
    </location>
</feature>
<feature type="strand" evidence="3">
    <location>
        <begin position="316"/>
        <end position="322"/>
    </location>
</feature>
<feature type="helix" evidence="3">
    <location>
        <begin position="328"/>
        <end position="335"/>
    </location>
</feature>
<feature type="turn" evidence="3">
    <location>
        <begin position="336"/>
        <end position="339"/>
    </location>
</feature>
<feature type="strand" evidence="3">
    <location>
        <begin position="341"/>
        <end position="345"/>
    </location>
</feature>
<feature type="helix" evidence="3">
    <location>
        <begin position="352"/>
        <end position="359"/>
    </location>
</feature>
<feature type="strand" evidence="3">
    <location>
        <begin position="362"/>
        <end position="366"/>
    </location>
</feature>
<comment type="function">
    <text evidence="1">Directs the termination of nascent peptide synthesis (translation) in response to the termination codons UAA, UAG and UGA.</text>
</comment>
<comment type="subunit">
    <text evidence="1">Heterodimer of two subunits, one of which binds GTP.</text>
</comment>
<comment type="interaction">
    <interactant intactId="EBI-15887661">
        <id>Q9YAF1</id>
    </interactant>
    <interactant intactId="EBI-15880729">
        <id>Q9YAV0</id>
        <label>tuf</label>
    </interactant>
    <organismsDiffer>false</organismsDiffer>
    <experiments>3</experiments>
</comment>
<comment type="subcellular location">
    <subcellularLocation>
        <location evidence="2">Cytoplasm</location>
    </subcellularLocation>
</comment>
<comment type="similarity">
    <text evidence="2">Belongs to the eukaryotic release factor 1 family.</text>
</comment>
<organism>
    <name type="scientific">Aeropyrum pernix (strain ATCC 700893 / DSM 11879 / JCM 9820 / NBRC 100138 / K1)</name>
    <dbReference type="NCBI Taxonomy" id="272557"/>
    <lineage>
        <taxon>Archaea</taxon>
        <taxon>Thermoproteota</taxon>
        <taxon>Thermoprotei</taxon>
        <taxon>Desulfurococcales</taxon>
        <taxon>Desulfurococcaceae</taxon>
        <taxon>Aeropyrum</taxon>
    </lineage>
</organism>
<gene>
    <name type="primary">prf1</name>
    <name type="ordered locus">APE_1988.1</name>
</gene>
<accession>Q9YAF1</accession>
<reference key="1">
    <citation type="journal article" date="1999" name="DNA Res.">
        <title>Complete genome sequence of an aerobic hyper-thermophilic crenarchaeon, Aeropyrum pernix K1.</title>
        <authorList>
            <person name="Kawarabayasi Y."/>
            <person name="Hino Y."/>
            <person name="Horikawa H."/>
            <person name="Yamazaki S."/>
            <person name="Haikawa Y."/>
            <person name="Jin-no K."/>
            <person name="Takahashi M."/>
            <person name="Sekine M."/>
            <person name="Baba S."/>
            <person name="Ankai A."/>
            <person name="Kosugi H."/>
            <person name="Hosoyama A."/>
            <person name="Fukui S."/>
            <person name="Nagai Y."/>
            <person name="Nishijima K."/>
            <person name="Nakazawa H."/>
            <person name="Takamiya M."/>
            <person name="Masuda S."/>
            <person name="Funahashi T."/>
            <person name="Tanaka T."/>
            <person name="Kudoh Y."/>
            <person name="Yamazaki J."/>
            <person name="Kushida N."/>
            <person name="Oguchi A."/>
            <person name="Aoki K."/>
            <person name="Kubota K."/>
            <person name="Nakamura Y."/>
            <person name="Nomura N."/>
            <person name="Sako Y."/>
            <person name="Kikuchi H."/>
        </authorList>
    </citation>
    <scope>NUCLEOTIDE SEQUENCE [LARGE SCALE GENOMIC DNA]</scope>
    <source>
        <strain>ATCC 700893 / DSM 11879 / JCM 9820 / NBRC 100138 / K1</strain>
    </source>
</reference>
<protein>
    <recommendedName>
        <fullName>Peptide chain release factor subunit 1</fullName>
    </recommendedName>
    <alternativeName>
        <fullName>Translation termination factor aRF1</fullName>
    </alternativeName>
</protein>
<sequence>MSQGRLEERLTISKRELARLLKELKKWSAPATVLLSLYIPPGRPLSDVMTLLRQEYSITDNIKLKRTRQAVKRALSAAMDRLQMLTSTPPNGLVLFCGEDMSTGKFECFMFSPPEPIRVFYYRTDKRFITDFLEDMVEDNNAIGIIIVERDQATIGLLKGARLEVLKELEGFVPGKHKMGGQSQRRYERIIEQMVDEFFKKVGEEASNLLVPLAEKGVLKGVIVAGPGLAKQEFVEGNYLDYRLKKILAPELVDVAYQGLQGLKEAVMKAEKVVEAQMYRDAVNAMEEFKLHLAKGTGMIVYGEKDVEAALEMGAVKTLLIHESREDLEEWVEKAKSSGAQVIVVPESLAEAEWFLKTFGGLAGILRFRISTV</sequence>
<evidence type="ECO:0000250" key="1"/>
<evidence type="ECO:0000305" key="2"/>
<evidence type="ECO:0007829" key="3">
    <source>
        <dbReference type="PDB" id="3AGK"/>
    </source>
</evidence>
<evidence type="ECO:0007829" key="4">
    <source>
        <dbReference type="PDB" id="3VMF"/>
    </source>
</evidence>
<keyword id="KW-0002">3D-structure</keyword>
<keyword id="KW-0963">Cytoplasm</keyword>
<keyword id="KW-0648">Protein biosynthesis</keyword>
<keyword id="KW-1185">Reference proteome</keyword>